<dbReference type="EMBL" id="CP000099">
    <property type="protein sequence ID" value="AAZ69081.1"/>
    <property type="molecule type" value="Genomic_DNA"/>
</dbReference>
<dbReference type="SMR" id="Q46GB1"/>
<dbReference type="STRING" id="269797.Mbar_A0094"/>
<dbReference type="PaxDb" id="269797-Mbar_A0094"/>
<dbReference type="KEGG" id="mba:Mbar_A0094"/>
<dbReference type="eggNOG" id="arCOG04090">
    <property type="taxonomic scope" value="Archaea"/>
</dbReference>
<dbReference type="HOGENOM" id="CLU_065464_0_0_2"/>
<dbReference type="OrthoDB" id="7144at2157"/>
<dbReference type="GO" id="GO:0022625">
    <property type="term" value="C:cytosolic large ribosomal subunit"/>
    <property type="evidence" value="ECO:0007669"/>
    <property type="project" value="TreeGrafter"/>
</dbReference>
<dbReference type="GO" id="GO:0019843">
    <property type="term" value="F:rRNA binding"/>
    <property type="evidence" value="ECO:0007669"/>
    <property type="project" value="UniProtKB-UniRule"/>
</dbReference>
<dbReference type="GO" id="GO:0003735">
    <property type="term" value="F:structural constituent of ribosome"/>
    <property type="evidence" value="ECO:0007669"/>
    <property type="project" value="InterPro"/>
</dbReference>
<dbReference type="GO" id="GO:0002181">
    <property type="term" value="P:cytoplasmic translation"/>
    <property type="evidence" value="ECO:0007669"/>
    <property type="project" value="TreeGrafter"/>
</dbReference>
<dbReference type="FunFam" id="3.90.930.12:FF:000008">
    <property type="entry name" value="50S ribosomal protein L6"/>
    <property type="match status" value="1"/>
</dbReference>
<dbReference type="Gene3D" id="3.90.930.12">
    <property type="entry name" value="Ribosomal protein L6, alpha-beta domain"/>
    <property type="match status" value="2"/>
</dbReference>
<dbReference type="HAMAP" id="MF_01365_A">
    <property type="entry name" value="Ribosomal_uL6_A"/>
    <property type="match status" value="1"/>
</dbReference>
<dbReference type="InterPro" id="IPR000702">
    <property type="entry name" value="Ribosomal_uL6-like"/>
</dbReference>
<dbReference type="InterPro" id="IPR036789">
    <property type="entry name" value="Ribosomal_uL6-like_a/b-dom_sf"/>
</dbReference>
<dbReference type="InterPro" id="IPR020040">
    <property type="entry name" value="Ribosomal_uL6_a/b-dom"/>
</dbReference>
<dbReference type="InterPro" id="IPR019907">
    <property type="entry name" value="Ribosomal_uL6_arc"/>
</dbReference>
<dbReference type="InterPro" id="IPR002359">
    <property type="entry name" value="Ribosomal_uL6_CS2"/>
</dbReference>
<dbReference type="NCBIfam" id="NF004037">
    <property type="entry name" value="PRK05518.1"/>
    <property type="match status" value="1"/>
</dbReference>
<dbReference type="NCBIfam" id="TIGR03653">
    <property type="entry name" value="uL6_arch"/>
    <property type="match status" value="1"/>
</dbReference>
<dbReference type="PANTHER" id="PTHR11655:SF16">
    <property type="entry name" value="60S RIBOSOMAL PROTEIN L9"/>
    <property type="match status" value="1"/>
</dbReference>
<dbReference type="PANTHER" id="PTHR11655">
    <property type="entry name" value="60S/50S RIBOSOMAL PROTEIN L6/L9"/>
    <property type="match status" value="1"/>
</dbReference>
<dbReference type="Pfam" id="PF00347">
    <property type="entry name" value="Ribosomal_L6"/>
    <property type="match status" value="2"/>
</dbReference>
<dbReference type="PIRSF" id="PIRSF002162">
    <property type="entry name" value="Ribosomal_L6"/>
    <property type="match status" value="1"/>
</dbReference>
<dbReference type="SUPFAM" id="SSF56053">
    <property type="entry name" value="Ribosomal protein L6"/>
    <property type="match status" value="2"/>
</dbReference>
<dbReference type="PROSITE" id="PS00700">
    <property type="entry name" value="RIBOSOMAL_L6_2"/>
    <property type="match status" value="1"/>
</dbReference>
<name>RL6_METBF</name>
<protein>
    <recommendedName>
        <fullName evidence="1">Large ribosomal subunit protein uL6</fullName>
    </recommendedName>
    <alternativeName>
        <fullName evidence="2">50S ribosomal protein L6</fullName>
    </alternativeName>
</protein>
<comment type="function">
    <text evidence="1">This protein binds to the 23S rRNA, and is important in its secondary structure. It is located near the subunit interface in the base of the L7/L12 stalk, and near the tRNA binding site of the peptidyltransferase center.</text>
</comment>
<comment type="subunit">
    <text evidence="1">Part of the 50S ribosomal subunit.</text>
</comment>
<comment type="similarity">
    <text evidence="1">Belongs to the universal ribosomal protein uL6 family.</text>
</comment>
<keyword id="KW-0687">Ribonucleoprotein</keyword>
<keyword id="KW-0689">Ribosomal protein</keyword>
<keyword id="KW-0694">RNA-binding</keyword>
<keyword id="KW-0699">rRNA-binding</keyword>
<feature type="chain" id="PRO_0000260988" description="Large ribosomal subunit protein uL6">
    <location>
        <begin position="1"/>
        <end position="177"/>
    </location>
</feature>
<sequence length="177" mass="19776">MVKEIARKIEIPEGISVSFSQDDVFTATGPLGTVERKLWYPGIKIYVRDGEVEVDAESSRKEQKAMVGTFTSHIKNLMKGVNEGFECKMTILYAHFPMQVKVDGKTLIIGNFLGEKKPRIAKILGETKVKVSGNEVTVSGINKEDVGQTAANIEQKTKIKRFDPRIFQDGIYIVQKP</sequence>
<reference key="1">
    <citation type="journal article" date="2006" name="J. Bacteriol.">
        <title>The Methanosarcina barkeri genome: comparative analysis with Methanosarcina acetivorans and Methanosarcina mazei reveals extensive rearrangement within methanosarcinal genomes.</title>
        <authorList>
            <person name="Maeder D.L."/>
            <person name="Anderson I."/>
            <person name="Brettin T.S."/>
            <person name="Bruce D.C."/>
            <person name="Gilna P."/>
            <person name="Han C.S."/>
            <person name="Lapidus A."/>
            <person name="Metcalf W.W."/>
            <person name="Saunders E."/>
            <person name="Tapia R."/>
            <person name="Sowers K.R."/>
        </authorList>
    </citation>
    <scope>NUCLEOTIDE SEQUENCE [LARGE SCALE GENOMIC DNA]</scope>
    <source>
        <strain>Fusaro / DSM 804</strain>
    </source>
</reference>
<accession>Q46GB1</accession>
<evidence type="ECO:0000255" key="1">
    <source>
        <dbReference type="HAMAP-Rule" id="MF_01365"/>
    </source>
</evidence>
<evidence type="ECO:0000305" key="2"/>
<proteinExistence type="inferred from homology"/>
<gene>
    <name evidence="1" type="primary">rpl6</name>
    <name type="ordered locus">Mbar_A0094</name>
</gene>
<organism>
    <name type="scientific">Methanosarcina barkeri (strain Fusaro / DSM 804)</name>
    <dbReference type="NCBI Taxonomy" id="269797"/>
    <lineage>
        <taxon>Archaea</taxon>
        <taxon>Methanobacteriati</taxon>
        <taxon>Methanobacteriota</taxon>
        <taxon>Stenosarchaea group</taxon>
        <taxon>Methanomicrobia</taxon>
        <taxon>Methanosarcinales</taxon>
        <taxon>Methanosarcinaceae</taxon>
        <taxon>Methanosarcina</taxon>
    </lineage>
</organism>